<sequence length="620" mass="67230">MDDTNQFMVSVAKIDAGMAILLTPSFHIIEFPSVLLPNDATAGSIIDISVHHNKEEEIARETAFDDVQKEIFETYGQKLPSPPVLKLKNATQTSIVLEWDPLQLSTARLKSLCLYRNNVRVLNISNPMTTHNAKLSGLSLDTEYDFSLVLDTTAGTFPSKHITIKTLRMIDLTGIQVCVGNMVPNEMEALQKCIERIHARPIQTSVRIDTTHFICSSTGGPEYEKAKAANIPILGLDYLLKCESEGRLVNVSGFYIENRASYNANASINSVEAAQNAAPNLNATTEQPKNTAEVAQGAASAKAPQQTTQQGTQNSANAEPSSSASVPAEAPETEAEQSIDVSSDIGLRSDSSKPNEAPTSSENIKADQPENSTKQENPEEDMQIKDAEEHSNLESTPAAQQTSEVEANNHQEKPSSLPAVEQINVNEENNTPETEGLEDEKEENNTAAESLINQEETTSGEAVTKSTVESSANEEEAEPNEIIEENAVKSLLNQEGPATNEEVEKNNANSENANGLTDEKIIEAPLDTKENSDDDKPSPAAAEDIGTNGAIEEIPQVSEVLEPEKAHTTNLQLNALDKEEDLNITTVKQSSEPTADDNLIPNKEAEIIQSSDEFESVNID</sequence>
<keyword id="KW-0333">Golgi apparatus</keyword>
<keyword id="KW-1185">Reference proteome</keyword>
<organism>
    <name type="scientific">Schizosaccharomyces pombe (strain 972 / ATCC 24843)</name>
    <name type="common">Fission yeast</name>
    <dbReference type="NCBI Taxonomy" id="284812"/>
    <lineage>
        <taxon>Eukaryota</taxon>
        <taxon>Fungi</taxon>
        <taxon>Dikarya</taxon>
        <taxon>Ascomycota</taxon>
        <taxon>Taphrinomycotina</taxon>
        <taxon>Schizosaccharomycetes</taxon>
        <taxon>Schizosaccharomycetales</taxon>
        <taxon>Schizosaccharomycetaceae</taxon>
        <taxon>Schizosaccharomyces</taxon>
    </lineage>
</organism>
<evidence type="ECO:0000255" key="1">
    <source>
        <dbReference type="PROSITE-ProRule" id="PRU00033"/>
    </source>
</evidence>
<evidence type="ECO:0000255" key="2">
    <source>
        <dbReference type="PROSITE-ProRule" id="PRU00316"/>
    </source>
</evidence>
<evidence type="ECO:0000256" key="3">
    <source>
        <dbReference type="SAM" id="MobiDB-lite"/>
    </source>
</evidence>
<evidence type="ECO:0000269" key="4">
    <source>
    </source>
</evidence>
<evidence type="ECO:0000305" key="5"/>
<feature type="chain" id="PRO_0000089660" description="Cell fusion protein cfr1">
    <location>
        <begin position="1"/>
        <end position="620"/>
    </location>
</feature>
<feature type="domain" description="Fibronectin type-III" evidence="2">
    <location>
        <begin position="79"/>
        <end position="169"/>
    </location>
</feature>
<feature type="domain" description="BRCT" evidence="1">
    <location>
        <begin position="167"/>
        <end position="256"/>
    </location>
</feature>
<feature type="region of interest" description="Disordered" evidence="3">
    <location>
        <begin position="287"/>
        <end position="566"/>
    </location>
</feature>
<feature type="region of interest" description="Disordered" evidence="3">
    <location>
        <begin position="588"/>
        <end position="620"/>
    </location>
</feature>
<feature type="compositionally biased region" description="Polar residues" evidence="3">
    <location>
        <begin position="303"/>
        <end position="314"/>
    </location>
</feature>
<feature type="compositionally biased region" description="Low complexity" evidence="3">
    <location>
        <begin position="315"/>
        <end position="330"/>
    </location>
</feature>
<feature type="compositionally biased region" description="Polar residues" evidence="3">
    <location>
        <begin position="352"/>
        <end position="375"/>
    </location>
</feature>
<feature type="compositionally biased region" description="Basic and acidic residues" evidence="3">
    <location>
        <begin position="382"/>
        <end position="392"/>
    </location>
</feature>
<feature type="compositionally biased region" description="Polar residues" evidence="3">
    <location>
        <begin position="393"/>
        <end position="406"/>
    </location>
</feature>
<feature type="compositionally biased region" description="Low complexity" evidence="3">
    <location>
        <begin position="424"/>
        <end position="434"/>
    </location>
</feature>
<feature type="compositionally biased region" description="Polar residues" evidence="3">
    <location>
        <begin position="445"/>
        <end position="468"/>
    </location>
</feature>
<feature type="compositionally biased region" description="Acidic residues" evidence="3">
    <location>
        <begin position="472"/>
        <end position="484"/>
    </location>
</feature>
<feature type="compositionally biased region" description="Polar residues" evidence="3">
    <location>
        <begin position="506"/>
        <end position="515"/>
    </location>
</feature>
<feature type="compositionally biased region" description="Basic and acidic residues" evidence="3">
    <location>
        <begin position="517"/>
        <end position="537"/>
    </location>
</feature>
<comment type="function">
    <text evidence="4">Required for cell fusion, independently of fus1. Appears to have a role in transporting proteins that are involved in mating. May act as a scaffold to retain cell fusion proteins in the cisternae of the Golgi. Degraded at the onset of mating and this leads to release of cell fusion proteins.</text>
</comment>
<comment type="subcellular location">
    <subcellularLocation>
        <location evidence="4">Golgi apparatus</location>
    </subcellularLocation>
</comment>
<comment type="similarity">
    <text evidence="5">Belongs to the CHS5 family.</text>
</comment>
<gene>
    <name type="primary">cfr1</name>
    <name type="ORF">SPAC6G9.12</name>
</gene>
<dbReference type="EMBL" id="CU329670">
    <property type="protein sequence ID" value="CAB03614.1"/>
    <property type="molecule type" value="Genomic_DNA"/>
</dbReference>
<dbReference type="PIR" id="T39074">
    <property type="entry name" value="T39074"/>
</dbReference>
<dbReference type="RefSeq" id="NP_594121.1">
    <property type="nucleotide sequence ID" value="NM_001019545.2"/>
</dbReference>
<dbReference type="SMR" id="Q92357"/>
<dbReference type="BioGRID" id="278463">
    <property type="interactions" value="17"/>
</dbReference>
<dbReference type="FunCoup" id="Q92357">
    <property type="interactions" value="40"/>
</dbReference>
<dbReference type="STRING" id="284812.Q92357"/>
<dbReference type="iPTMnet" id="Q92357"/>
<dbReference type="PaxDb" id="4896-SPAC6G9.12.1"/>
<dbReference type="EnsemblFungi" id="SPAC6G9.12.1">
    <property type="protein sequence ID" value="SPAC6G9.12.1:pep"/>
    <property type="gene ID" value="SPAC6G9.12"/>
</dbReference>
<dbReference type="GeneID" id="2541978"/>
<dbReference type="KEGG" id="spo:2541978"/>
<dbReference type="PomBase" id="SPAC6G9.12">
    <property type="gene designation" value="cfr1"/>
</dbReference>
<dbReference type="VEuPathDB" id="FungiDB:SPAC6G9.12"/>
<dbReference type="eggNOG" id="ENOG502QRF7">
    <property type="taxonomic scope" value="Eukaryota"/>
</dbReference>
<dbReference type="HOGENOM" id="CLU_019904_3_0_1"/>
<dbReference type="InParanoid" id="Q92357"/>
<dbReference type="OMA" id="TPYEFQL"/>
<dbReference type="PhylomeDB" id="Q92357"/>
<dbReference type="PRO" id="PR:Q92357"/>
<dbReference type="Proteomes" id="UP000002485">
    <property type="component" value="Chromosome I"/>
</dbReference>
<dbReference type="GO" id="GO:0005829">
    <property type="term" value="C:cytosol"/>
    <property type="evidence" value="ECO:0007005"/>
    <property type="project" value="PomBase"/>
</dbReference>
<dbReference type="GO" id="GO:0005769">
    <property type="term" value="C:early endosome"/>
    <property type="evidence" value="ECO:0000314"/>
    <property type="project" value="PomBase"/>
</dbReference>
<dbReference type="GO" id="GO:0034044">
    <property type="term" value="C:exomer complex"/>
    <property type="evidence" value="ECO:0000314"/>
    <property type="project" value="PomBase"/>
</dbReference>
<dbReference type="GO" id="GO:0005794">
    <property type="term" value="C:Golgi apparatus"/>
    <property type="evidence" value="ECO:0000314"/>
    <property type="project" value="PomBase"/>
</dbReference>
<dbReference type="GO" id="GO:0005802">
    <property type="term" value="C:trans-Golgi network"/>
    <property type="evidence" value="ECO:0000314"/>
    <property type="project" value="PomBase"/>
</dbReference>
<dbReference type="GO" id="GO:0046983">
    <property type="term" value="F:protein dimerization activity"/>
    <property type="evidence" value="ECO:0007669"/>
    <property type="project" value="InterPro"/>
</dbReference>
<dbReference type="GO" id="GO:0030674">
    <property type="term" value="F:protein-macromolecule adaptor activity"/>
    <property type="evidence" value="ECO:0000304"/>
    <property type="project" value="PomBase"/>
</dbReference>
<dbReference type="GO" id="GO:0000747">
    <property type="term" value="P:conjugation with cellular fusion"/>
    <property type="evidence" value="ECO:0000318"/>
    <property type="project" value="GO_Central"/>
</dbReference>
<dbReference type="GO" id="GO:0006895">
    <property type="term" value="P:Golgi to endosome transport"/>
    <property type="evidence" value="ECO:0000315"/>
    <property type="project" value="PomBase"/>
</dbReference>
<dbReference type="GO" id="GO:0006893">
    <property type="term" value="P:Golgi to plasma membrane transport"/>
    <property type="evidence" value="ECO:0000318"/>
    <property type="project" value="GO_Central"/>
</dbReference>
<dbReference type="GO" id="GO:0006896">
    <property type="term" value="P:Golgi to vacuole transport"/>
    <property type="evidence" value="ECO:0000353"/>
    <property type="project" value="PomBase"/>
</dbReference>
<dbReference type="GO" id="GO:0006874">
    <property type="term" value="P:intracellular calcium ion homeostasis"/>
    <property type="evidence" value="ECO:0000315"/>
    <property type="project" value="PomBase"/>
</dbReference>
<dbReference type="GO" id="GO:0030007">
    <property type="term" value="P:intracellular potassium ion homeostasis"/>
    <property type="evidence" value="ECO:0000315"/>
    <property type="project" value="PomBase"/>
</dbReference>
<dbReference type="CDD" id="cd13945">
    <property type="entry name" value="Chs5_N"/>
    <property type="match status" value="1"/>
</dbReference>
<dbReference type="CDD" id="cd00063">
    <property type="entry name" value="FN3"/>
    <property type="match status" value="1"/>
</dbReference>
<dbReference type="Gene3D" id="6.20.120.50">
    <property type="match status" value="1"/>
</dbReference>
<dbReference type="Gene3D" id="3.40.50.10190">
    <property type="entry name" value="BRCT domain"/>
    <property type="match status" value="1"/>
</dbReference>
<dbReference type="Gene3D" id="2.60.40.10">
    <property type="entry name" value="Immunoglobulins"/>
    <property type="match status" value="1"/>
</dbReference>
<dbReference type="InterPro" id="IPR001357">
    <property type="entry name" value="BRCT_dom"/>
</dbReference>
<dbReference type="InterPro" id="IPR036420">
    <property type="entry name" value="BRCT_dom_sf"/>
</dbReference>
<dbReference type="InterPro" id="IPR031673">
    <property type="entry name" value="Chs5_N"/>
</dbReference>
<dbReference type="InterPro" id="IPR052827">
    <property type="entry name" value="CHS_Export/Cell_Fusion_Reg"/>
</dbReference>
<dbReference type="InterPro" id="IPR031669">
    <property type="entry name" value="Fn3_2"/>
</dbReference>
<dbReference type="InterPro" id="IPR003961">
    <property type="entry name" value="FN3_dom"/>
</dbReference>
<dbReference type="InterPro" id="IPR036116">
    <property type="entry name" value="FN3_sf"/>
</dbReference>
<dbReference type="InterPro" id="IPR013783">
    <property type="entry name" value="Ig-like_fold"/>
</dbReference>
<dbReference type="PANTHER" id="PTHR47351">
    <property type="entry name" value="CHITIN BIOSYNTHESIS PROTEIN CHS5"/>
    <property type="match status" value="1"/>
</dbReference>
<dbReference type="PANTHER" id="PTHR47351:SF1">
    <property type="entry name" value="CHITIN BIOSYNTHESIS PROTEIN CHS5"/>
    <property type="match status" value="1"/>
</dbReference>
<dbReference type="Pfam" id="PF16892">
    <property type="entry name" value="CHS5_N"/>
    <property type="match status" value="1"/>
</dbReference>
<dbReference type="Pfam" id="PF16893">
    <property type="entry name" value="fn3_2"/>
    <property type="match status" value="1"/>
</dbReference>
<dbReference type="Pfam" id="PF12738">
    <property type="entry name" value="PTCB-BRCT"/>
    <property type="match status" value="1"/>
</dbReference>
<dbReference type="SMART" id="SM00292">
    <property type="entry name" value="BRCT"/>
    <property type="match status" value="1"/>
</dbReference>
<dbReference type="SMART" id="SM00060">
    <property type="entry name" value="FN3"/>
    <property type="match status" value="1"/>
</dbReference>
<dbReference type="SUPFAM" id="SSF52113">
    <property type="entry name" value="BRCT domain"/>
    <property type="match status" value="1"/>
</dbReference>
<dbReference type="SUPFAM" id="SSF49265">
    <property type="entry name" value="Fibronectin type III"/>
    <property type="match status" value="1"/>
</dbReference>
<dbReference type="PROSITE" id="PS50172">
    <property type="entry name" value="BRCT"/>
    <property type="match status" value="1"/>
</dbReference>
<dbReference type="PROSITE" id="PS50853">
    <property type="entry name" value="FN3"/>
    <property type="match status" value="1"/>
</dbReference>
<reference key="1">
    <citation type="journal article" date="2002" name="Nature">
        <title>The genome sequence of Schizosaccharomyces pombe.</title>
        <authorList>
            <person name="Wood V."/>
            <person name="Gwilliam R."/>
            <person name="Rajandream M.A."/>
            <person name="Lyne M.H."/>
            <person name="Lyne R."/>
            <person name="Stewart A."/>
            <person name="Sgouros J.G."/>
            <person name="Peat N."/>
            <person name="Hayles J."/>
            <person name="Baker S.G."/>
            <person name="Basham D."/>
            <person name="Bowman S."/>
            <person name="Brooks K."/>
            <person name="Brown D."/>
            <person name="Brown S."/>
            <person name="Chillingworth T."/>
            <person name="Churcher C.M."/>
            <person name="Collins M."/>
            <person name="Connor R."/>
            <person name="Cronin A."/>
            <person name="Davis P."/>
            <person name="Feltwell T."/>
            <person name="Fraser A."/>
            <person name="Gentles S."/>
            <person name="Goble A."/>
            <person name="Hamlin N."/>
            <person name="Harris D.E."/>
            <person name="Hidalgo J."/>
            <person name="Hodgson G."/>
            <person name="Holroyd S."/>
            <person name="Hornsby T."/>
            <person name="Howarth S."/>
            <person name="Huckle E.J."/>
            <person name="Hunt S."/>
            <person name="Jagels K."/>
            <person name="James K.D."/>
            <person name="Jones L."/>
            <person name="Jones M."/>
            <person name="Leather S."/>
            <person name="McDonald S."/>
            <person name="McLean J."/>
            <person name="Mooney P."/>
            <person name="Moule S."/>
            <person name="Mungall K.L."/>
            <person name="Murphy L.D."/>
            <person name="Niblett D."/>
            <person name="Odell C."/>
            <person name="Oliver K."/>
            <person name="O'Neil S."/>
            <person name="Pearson D."/>
            <person name="Quail M.A."/>
            <person name="Rabbinowitsch E."/>
            <person name="Rutherford K.M."/>
            <person name="Rutter S."/>
            <person name="Saunders D."/>
            <person name="Seeger K."/>
            <person name="Sharp S."/>
            <person name="Skelton J."/>
            <person name="Simmonds M.N."/>
            <person name="Squares R."/>
            <person name="Squares S."/>
            <person name="Stevens K."/>
            <person name="Taylor K."/>
            <person name="Taylor R.G."/>
            <person name="Tivey A."/>
            <person name="Walsh S.V."/>
            <person name="Warren T."/>
            <person name="Whitehead S."/>
            <person name="Woodward J.R."/>
            <person name="Volckaert G."/>
            <person name="Aert R."/>
            <person name="Robben J."/>
            <person name="Grymonprez B."/>
            <person name="Weltjens I."/>
            <person name="Vanstreels E."/>
            <person name="Rieger M."/>
            <person name="Schaefer M."/>
            <person name="Mueller-Auer S."/>
            <person name="Gabel C."/>
            <person name="Fuchs M."/>
            <person name="Duesterhoeft A."/>
            <person name="Fritzc C."/>
            <person name="Holzer E."/>
            <person name="Moestl D."/>
            <person name="Hilbert H."/>
            <person name="Borzym K."/>
            <person name="Langer I."/>
            <person name="Beck A."/>
            <person name="Lehrach H."/>
            <person name="Reinhardt R."/>
            <person name="Pohl T.M."/>
            <person name="Eger P."/>
            <person name="Zimmermann W."/>
            <person name="Wedler H."/>
            <person name="Wambutt R."/>
            <person name="Purnelle B."/>
            <person name="Goffeau A."/>
            <person name="Cadieu E."/>
            <person name="Dreano S."/>
            <person name="Gloux S."/>
            <person name="Lelaure V."/>
            <person name="Mottier S."/>
            <person name="Galibert F."/>
            <person name="Aves S.J."/>
            <person name="Xiang Z."/>
            <person name="Hunt C."/>
            <person name="Moore K."/>
            <person name="Hurst S.M."/>
            <person name="Lucas M."/>
            <person name="Rochet M."/>
            <person name="Gaillardin C."/>
            <person name="Tallada V.A."/>
            <person name="Garzon A."/>
            <person name="Thode G."/>
            <person name="Daga R.R."/>
            <person name="Cruzado L."/>
            <person name="Jimenez J."/>
            <person name="Sanchez M."/>
            <person name="del Rey F."/>
            <person name="Benito J."/>
            <person name="Dominguez A."/>
            <person name="Revuelta J.L."/>
            <person name="Moreno S."/>
            <person name="Armstrong J."/>
            <person name="Forsburg S.L."/>
            <person name="Cerutti L."/>
            <person name="Lowe T."/>
            <person name="McCombie W.R."/>
            <person name="Paulsen I."/>
            <person name="Potashkin J."/>
            <person name="Shpakovski G.V."/>
            <person name="Ussery D."/>
            <person name="Barrell B.G."/>
            <person name="Nurse P."/>
        </authorList>
    </citation>
    <scope>NUCLEOTIDE SEQUENCE [LARGE SCALE GENOMIC DNA]</scope>
    <source>
        <strain>972 / ATCC 24843</strain>
    </source>
</reference>
<reference key="2">
    <citation type="journal article" date="2006" name="Yeast">
        <title>The Schizosaccharomyces pombe cfr1(+) gene participates in mating through a new pathway that is independent of fus1(+).</title>
        <authorList>
            <person name="Cartagena-Lirola H."/>
            <person name="Duran A."/>
            <person name="Valdivieso M.-H."/>
        </authorList>
    </citation>
    <scope>FUNCTION</scope>
    <scope>SUBCELLULAR LOCATION</scope>
</reference>
<name>CFR1_SCHPO</name>
<accession>Q92357</accession>
<protein>
    <recommendedName>
        <fullName>Cell fusion protein cfr1</fullName>
    </recommendedName>
    <alternativeName>
        <fullName>CHS5-related protein 1</fullName>
    </alternativeName>
</protein>
<proteinExistence type="inferred from homology"/>